<gene>
    <name evidence="1" type="primary">mdh</name>
    <name type="ordered locus">CHU_3020</name>
</gene>
<sequence length="312" mass="33351">MKVTVVGAGNVGATCADVLAYREIVNEVILLDIKEGVAEGKALDIWQKAPITQYDTKTTGVTNDYSKTANSDVVVITSGLPRKPGMTRDDLISTNAGIVRAVTESVVKYSPNAIIIVVSNPLDVMTYCAHITSKLPRNKVIGMAGVLDTARYRAFLADEIGCSPKEIQGMLLGGHGDTMVPLPRYTTVGGIPVTELVEADKLNAIIERTKNGGGELVKLMGTSAWYAPGAAAAQMVEAIVKDQKKIIPVCIKLEGEYGIDDCYLGVPAVIGKNGIEKVIELKLNAEEKALMETSRKHVKEVMNVLDGLPQQA</sequence>
<comment type="function">
    <text evidence="1">Catalyzes the reversible oxidation of malate to oxaloacetate.</text>
</comment>
<comment type="catalytic activity">
    <reaction evidence="1">
        <text>(S)-malate + NAD(+) = oxaloacetate + NADH + H(+)</text>
        <dbReference type="Rhea" id="RHEA:21432"/>
        <dbReference type="ChEBI" id="CHEBI:15378"/>
        <dbReference type="ChEBI" id="CHEBI:15589"/>
        <dbReference type="ChEBI" id="CHEBI:16452"/>
        <dbReference type="ChEBI" id="CHEBI:57540"/>
        <dbReference type="ChEBI" id="CHEBI:57945"/>
        <dbReference type="EC" id="1.1.1.37"/>
    </reaction>
</comment>
<comment type="similarity">
    <text evidence="1">Belongs to the LDH/MDH superfamily. MDH type 3 family.</text>
</comment>
<keyword id="KW-0520">NAD</keyword>
<keyword id="KW-0560">Oxidoreductase</keyword>
<keyword id="KW-1185">Reference proteome</keyword>
<keyword id="KW-0816">Tricarboxylic acid cycle</keyword>
<feature type="chain" id="PRO_1000026470" description="Malate dehydrogenase">
    <location>
        <begin position="1"/>
        <end position="312"/>
    </location>
</feature>
<feature type="active site" description="Proton acceptor" evidence="1">
    <location>
        <position position="175"/>
    </location>
</feature>
<feature type="binding site" evidence="1">
    <location>
        <begin position="7"/>
        <end position="12"/>
    </location>
    <ligand>
        <name>NAD(+)</name>
        <dbReference type="ChEBI" id="CHEBI:57540"/>
    </ligand>
</feature>
<feature type="binding site" evidence="1">
    <location>
        <position position="32"/>
    </location>
    <ligand>
        <name>NAD(+)</name>
        <dbReference type="ChEBI" id="CHEBI:57540"/>
    </ligand>
</feature>
<feature type="binding site" evidence="1">
    <location>
        <position position="82"/>
    </location>
    <ligand>
        <name>substrate</name>
    </ligand>
</feature>
<feature type="binding site" evidence="1">
    <location>
        <position position="88"/>
    </location>
    <ligand>
        <name>substrate</name>
    </ligand>
</feature>
<feature type="binding site" evidence="1">
    <location>
        <position position="95"/>
    </location>
    <ligand>
        <name>NAD(+)</name>
        <dbReference type="ChEBI" id="CHEBI:57540"/>
    </ligand>
</feature>
<feature type="binding site" evidence="1">
    <location>
        <begin position="118"/>
        <end position="120"/>
    </location>
    <ligand>
        <name>NAD(+)</name>
        <dbReference type="ChEBI" id="CHEBI:57540"/>
    </ligand>
</feature>
<feature type="binding site" evidence="1">
    <location>
        <position position="120"/>
    </location>
    <ligand>
        <name>substrate</name>
    </ligand>
</feature>
<feature type="binding site" evidence="1">
    <location>
        <position position="151"/>
    </location>
    <ligand>
        <name>substrate</name>
    </ligand>
</feature>
<proteinExistence type="inferred from homology"/>
<organism>
    <name type="scientific">Cytophaga hutchinsonii (strain ATCC 33406 / DSM 1761 / CIP 103989 / NBRC 15051 / NCIMB 9469 / D465)</name>
    <dbReference type="NCBI Taxonomy" id="269798"/>
    <lineage>
        <taxon>Bacteria</taxon>
        <taxon>Pseudomonadati</taxon>
        <taxon>Bacteroidota</taxon>
        <taxon>Cytophagia</taxon>
        <taxon>Cytophagales</taxon>
        <taxon>Cytophagaceae</taxon>
        <taxon>Cytophaga</taxon>
    </lineage>
</organism>
<evidence type="ECO:0000255" key="1">
    <source>
        <dbReference type="HAMAP-Rule" id="MF_00487"/>
    </source>
</evidence>
<reference key="1">
    <citation type="journal article" date="2007" name="Appl. Environ. Microbiol.">
        <title>Genome sequence of the cellulolytic gliding bacterium Cytophaga hutchinsonii.</title>
        <authorList>
            <person name="Xie G."/>
            <person name="Bruce D.C."/>
            <person name="Challacombe J.F."/>
            <person name="Chertkov O."/>
            <person name="Detter J.C."/>
            <person name="Gilna P."/>
            <person name="Han C.S."/>
            <person name="Lucas S."/>
            <person name="Misra M."/>
            <person name="Myers G.L."/>
            <person name="Richardson P."/>
            <person name="Tapia R."/>
            <person name="Thayer N."/>
            <person name="Thompson L.S."/>
            <person name="Brettin T.S."/>
            <person name="Henrissat B."/>
            <person name="Wilson D.B."/>
            <person name="McBride M.J."/>
        </authorList>
    </citation>
    <scope>NUCLEOTIDE SEQUENCE [LARGE SCALE GENOMIC DNA]</scope>
    <source>
        <strain>ATCC 33406 / DSM 1761 / JCM 20678 / CIP 103989 / IAM 12607 / NBRC 15051 / NCIMB 9469 / D465</strain>
    </source>
</reference>
<accession>Q11QQ3</accession>
<name>MDH_CYTH3</name>
<dbReference type="EC" id="1.1.1.37" evidence="1"/>
<dbReference type="EMBL" id="CP000383">
    <property type="protein sequence ID" value="ABG60261.1"/>
    <property type="molecule type" value="Genomic_DNA"/>
</dbReference>
<dbReference type="RefSeq" id="WP_011586371.1">
    <property type="nucleotide sequence ID" value="NC_008255.1"/>
</dbReference>
<dbReference type="SMR" id="Q11QQ3"/>
<dbReference type="STRING" id="269798.CHU_3020"/>
<dbReference type="KEGG" id="chu:CHU_3020"/>
<dbReference type="eggNOG" id="COG0039">
    <property type="taxonomic scope" value="Bacteria"/>
</dbReference>
<dbReference type="HOGENOM" id="CLU_045401_2_1_10"/>
<dbReference type="OrthoDB" id="9802969at2"/>
<dbReference type="Proteomes" id="UP000001822">
    <property type="component" value="Chromosome"/>
</dbReference>
<dbReference type="GO" id="GO:0004459">
    <property type="term" value="F:L-lactate dehydrogenase activity"/>
    <property type="evidence" value="ECO:0007669"/>
    <property type="project" value="TreeGrafter"/>
</dbReference>
<dbReference type="GO" id="GO:0030060">
    <property type="term" value="F:L-malate dehydrogenase (NAD+) activity"/>
    <property type="evidence" value="ECO:0007669"/>
    <property type="project" value="UniProtKB-UniRule"/>
</dbReference>
<dbReference type="GO" id="GO:0006089">
    <property type="term" value="P:lactate metabolic process"/>
    <property type="evidence" value="ECO:0007669"/>
    <property type="project" value="TreeGrafter"/>
</dbReference>
<dbReference type="GO" id="GO:0006099">
    <property type="term" value="P:tricarboxylic acid cycle"/>
    <property type="evidence" value="ECO:0007669"/>
    <property type="project" value="UniProtKB-UniRule"/>
</dbReference>
<dbReference type="CDD" id="cd01339">
    <property type="entry name" value="LDH-like_MDH"/>
    <property type="match status" value="1"/>
</dbReference>
<dbReference type="FunFam" id="3.40.50.720:FF:000018">
    <property type="entry name" value="Malate dehydrogenase"/>
    <property type="match status" value="1"/>
</dbReference>
<dbReference type="FunFam" id="3.90.110.10:FF:000004">
    <property type="entry name" value="Malate dehydrogenase"/>
    <property type="match status" value="1"/>
</dbReference>
<dbReference type="Gene3D" id="3.90.110.10">
    <property type="entry name" value="Lactate dehydrogenase/glycoside hydrolase, family 4, C-terminal"/>
    <property type="match status" value="1"/>
</dbReference>
<dbReference type="Gene3D" id="3.40.50.720">
    <property type="entry name" value="NAD(P)-binding Rossmann-like Domain"/>
    <property type="match status" value="1"/>
</dbReference>
<dbReference type="HAMAP" id="MF_00487">
    <property type="entry name" value="Malate_dehydrog_3"/>
    <property type="match status" value="1"/>
</dbReference>
<dbReference type="InterPro" id="IPR001557">
    <property type="entry name" value="L-lactate/malate_DH"/>
</dbReference>
<dbReference type="InterPro" id="IPR022383">
    <property type="entry name" value="Lactate/malate_DH_C"/>
</dbReference>
<dbReference type="InterPro" id="IPR001236">
    <property type="entry name" value="Lactate/malate_DH_N"/>
</dbReference>
<dbReference type="InterPro" id="IPR015955">
    <property type="entry name" value="Lactate_DH/Glyco_Ohase_4_C"/>
</dbReference>
<dbReference type="InterPro" id="IPR011275">
    <property type="entry name" value="Malate_DH_type3"/>
</dbReference>
<dbReference type="InterPro" id="IPR036291">
    <property type="entry name" value="NAD(P)-bd_dom_sf"/>
</dbReference>
<dbReference type="NCBIfam" id="TIGR01763">
    <property type="entry name" value="MalateDH_bact"/>
    <property type="match status" value="1"/>
</dbReference>
<dbReference type="NCBIfam" id="NF004863">
    <property type="entry name" value="PRK06223.1"/>
    <property type="match status" value="1"/>
</dbReference>
<dbReference type="PANTHER" id="PTHR43128">
    <property type="entry name" value="L-2-HYDROXYCARBOXYLATE DEHYDROGENASE (NAD(P)(+))"/>
    <property type="match status" value="1"/>
</dbReference>
<dbReference type="PANTHER" id="PTHR43128:SF16">
    <property type="entry name" value="L-LACTATE DEHYDROGENASE"/>
    <property type="match status" value="1"/>
</dbReference>
<dbReference type="Pfam" id="PF02866">
    <property type="entry name" value="Ldh_1_C"/>
    <property type="match status" value="1"/>
</dbReference>
<dbReference type="Pfam" id="PF00056">
    <property type="entry name" value="Ldh_1_N"/>
    <property type="match status" value="1"/>
</dbReference>
<dbReference type="PIRSF" id="PIRSF000102">
    <property type="entry name" value="Lac_mal_DH"/>
    <property type="match status" value="1"/>
</dbReference>
<dbReference type="PRINTS" id="PR00086">
    <property type="entry name" value="LLDHDRGNASE"/>
</dbReference>
<dbReference type="SUPFAM" id="SSF56327">
    <property type="entry name" value="LDH C-terminal domain-like"/>
    <property type="match status" value="1"/>
</dbReference>
<dbReference type="SUPFAM" id="SSF51735">
    <property type="entry name" value="NAD(P)-binding Rossmann-fold domains"/>
    <property type="match status" value="1"/>
</dbReference>
<protein>
    <recommendedName>
        <fullName evidence="1">Malate dehydrogenase</fullName>
        <ecNumber evidence="1">1.1.1.37</ecNumber>
    </recommendedName>
</protein>